<organism>
    <name type="scientific">Mus musculus</name>
    <name type="common">Mouse</name>
    <dbReference type="NCBI Taxonomy" id="10090"/>
    <lineage>
        <taxon>Eukaryota</taxon>
        <taxon>Metazoa</taxon>
        <taxon>Chordata</taxon>
        <taxon>Craniata</taxon>
        <taxon>Vertebrata</taxon>
        <taxon>Euteleostomi</taxon>
        <taxon>Mammalia</taxon>
        <taxon>Eutheria</taxon>
        <taxon>Euarchontoglires</taxon>
        <taxon>Glires</taxon>
        <taxon>Rodentia</taxon>
        <taxon>Myomorpha</taxon>
        <taxon>Muroidea</taxon>
        <taxon>Muridae</taxon>
        <taxon>Murinae</taxon>
        <taxon>Mus</taxon>
        <taxon>Mus</taxon>
    </lineage>
</organism>
<proteinExistence type="evidence at protein level"/>
<comment type="function">
    <text evidence="1 10 11">Macrophage-restricted adhesion molecule that mediates sialic-acid dependent binding to lymphocytes, including granulocytes, monocytes, natural killer cells, B-cells and CD8 T-cells. Plays a crucial role in limiting bacterial dissemination by engaging sialylated bacteria to promote effective phagocytosis and antigen presentation for the adaptive immune response (PubMed:24788876). Mediates the uptake of various enveloped viruses via sialic acid recognition and subsequently induces the formation of intracellular compartments filled with virions (VCCs) (PubMed:26370074). In turn, enhances macrophage-to-T-cell transmission of several viruses including murine leukemia virus (PubMed:26370074). Acts as an endocytic receptor mediating clathrin dependent endocytosis. Preferentially binds to alpha-2,3-linked sialic acid (By similarity). Binds to SPN/CD43 on T-cells (By similarity). May play a role in hemopoiesis. Plays a role in the inhibition of antiviral innate immune by promoting TBK1 degradation via TYROBP and TRIM27-mediated ubiquitination (By similarity).</text>
</comment>
<comment type="subunit">
    <text evidence="5 6 7 8 12">Interacts with CLEC10A.</text>
</comment>
<comment type="subcellular location">
    <molecule>Isoform 1</molecule>
    <subcellularLocation>
        <location>Cell membrane</location>
        <topology>Single-pass type I membrane protein</topology>
    </subcellularLocation>
</comment>
<comment type="subcellular location">
    <molecule>Isoform 2</molecule>
    <subcellularLocation>
        <location>Secreted</location>
    </subcellularLocation>
</comment>
<comment type="subcellular location">
    <molecule>Isoform 3</molecule>
    <subcellularLocation>
        <location>Secreted</location>
    </subcellularLocation>
</comment>
<comment type="alternative products">
    <event type="alternative splicing"/>
    <isoform>
        <id>Q62230-1</id>
        <name>1</name>
        <sequence type="displayed"/>
    </isoform>
    <isoform>
        <id>Q62230-2</id>
        <name>2</name>
        <sequence type="described" ref="VSP_002573 VSP_002574"/>
    </isoform>
    <isoform>
        <id>Q62230-3</id>
        <name>3</name>
        <sequence type="described" ref="VSP_002575 VSP_002576"/>
    </isoform>
</comment>
<comment type="tissue specificity">
    <text evidence="7 11">Detected in lymph node in the subcapsular sinus, interfollicular regions, and T and B-cell boundary (at protein level). Expressed by macrophages in various tissues (PubMed:26370074). Highest expression in spleen and lymph node with lower amounts in lung, liver, bone marrow, heart and skin. No expression in thymus, kidney, brain or small intestine.</text>
</comment>
<comment type="induction">
    <text evidence="11">By interferon-alpha (PubMed:26370074).</text>
</comment>
<comment type="disruption phenotype">
    <text evidence="9 10">SIGLEC1-deficient mice are viable, display no gross developmental abnormalities, and exhibit only subtle changes in B- and T-cell populations (PubMed:16449664). However, they are significantly more susceptible to bacterial infection than WT (PubMed:24788876). In addition, serum IgM and IgG amounts are greatly reduced in mutant mice (PubMed:16449664, PubMed:24788876).</text>
</comment>
<comment type="similarity">
    <text evidence="14">Belongs to the immunoglobulin superfamily. SIGLEC (sialic acid binding Ig-like lectin) family.</text>
</comment>
<comment type="sequence caution" evidence="14">
    <conflict type="frameshift">
        <sequence resource="EMBL-CDS" id="CAA85268"/>
    </conflict>
</comment>
<comment type="sequence caution" evidence="14">
    <conflict type="frameshift">
        <sequence resource="EMBL-CDS" id="CAA85290"/>
    </conflict>
</comment>
<comment type="online information" name="Functional Glycomics Gateway - Glycan Binding">
    <link uri="http://www.functionalglycomics.org/glycomics/GBPServlet?&amp;operationType=view&amp;cbpId=cbp_mou_Itlect_193"/>
    <text>Siglec-1</text>
</comment>
<dbReference type="EMBL" id="Z36293">
    <property type="protein sequence ID" value="CAA85290.1"/>
    <property type="status" value="ALT_FRAME"/>
    <property type="molecule type" value="mRNA"/>
</dbReference>
<dbReference type="EMBL" id="Z36233">
    <property type="protein sequence ID" value="CAA85268.1"/>
    <property type="status" value="ALT_FRAME"/>
    <property type="molecule type" value="mRNA"/>
</dbReference>
<dbReference type="EMBL" id="Z36234">
    <property type="protein sequence ID" value="CAA85269.1"/>
    <property type="molecule type" value="mRNA"/>
</dbReference>
<dbReference type="EMBL" id="U92842">
    <property type="protein sequence ID" value="AAB95641.1"/>
    <property type="molecule type" value="Genomic_DNA"/>
</dbReference>
<dbReference type="EMBL" id="U92833">
    <property type="protein sequence ID" value="AAB95641.1"/>
    <property type="status" value="JOINED"/>
    <property type="molecule type" value="Genomic_DNA"/>
</dbReference>
<dbReference type="EMBL" id="U92834">
    <property type="protein sequence ID" value="AAB95641.1"/>
    <property type="status" value="JOINED"/>
    <property type="molecule type" value="Genomic_DNA"/>
</dbReference>
<dbReference type="EMBL" id="U92836">
    <property type="protein sequence ID" value="AAB95641.1"/>
    <property type="status" value="JOINED"/>
    <property type="molecule type" value="Genomic_DNA"/>
</dbReference>
<dbReference type="EMBL" id="U92837">
    <property type="protein sequence ID" value="AAB95641.1"/>
    <property type="status" value="JOINED"/>
    <property type="molecule type" value="Genomic_DNA"/>
</dbReference>
<dbReference type="EMBL" id="U92838">
    <property type="protein sequence ID" value="AAB95641.1"/>
    <property type="status" value="JOINED"/>
    <property type="molecule type" value="Genomic_DNA"/>
</dbReference>
<dbReference type="EMBL" id="U92839">
    <property type="protein sequence ID" value="AAB95641.1"/>
    <property type="status" value="JOINED"/>
    <property type="molecule type" value="Genomic_DNA"/>
</dbReference>
<dbReference type="EMBL" id="U92840">
    <property type="protein sequence ID" value="AAB95641.1"/>
    <property type="status" value="JOINED"/>
    <property type="molecule type" value="Genomic_DNA"/>
</dbReference>
<dbReference type="EMBL" id="U92841">
    <property type="protein sequence ID" value="AAB95641.1"/>
    <property type="status" value="JOINED"/>
    <property type="molecule type" value="Genomic_DNA"/>
</dbReference>
<dbReference type="EMBL" id="AL831736">
    <property type="status" value="NOT_ANNOTATED_CDS"/>
    <property type="molecule type" value="Genomic_DNA"/>
</dbReference>
<dbReference type="EMBL" id="AL833771">
    <property type="status" value="NOT_ANNOTATED_CDS"/>
    <property type="molecule type" value="Genomic_DNA"/>
</dbReference>
<dbReference type="PIR" id="S50065">
    <property type="entry name" value="S50065"/>
</dbReference>
<dbReference type="RefSeq" id="NP_035556.3">
    <property type="nucleotide sequence ID" value="NM_011426.3"/>
</dbReference>
<dbReference type="PDB" id="1OD7">
    <property type="method" value="X-ray"/>
    <property type="resolution" value="3.00 A"/>
    <property type="chains" value="A=20-138"/>
</dbReference>
<dbReference type="PDB" id="1OD9">
    <property type="method" value="X-ray"/>
    <property type="resolution" value="2.10 A"/>
    <property type="chains" value="A=20-138"/>
</dbReference>
<dbReference type="PDB" id="1ODA">
    <property type="method" value="X-ray"/>
    <property type="resolution" value="3.31 A"/>
    <property type="chains" value="A=20-138"/>
</dbReference>
<dbReference type="PDB" id="1QFO">
    <property type="method" value="X-ray"/>
    <property type="resolution" value="1.85 A"/>
    <property type="chains" value="A/B/C=20-138"/>
</dbReference>
<dbReference type="PDB" id="1QFP">
    <property type="method" value="X-ray"/>
    <property type="resolution" value="2.80 A"/>
    <property type="chains" value="A=20-138"/>
</dbReference>
<dbReference type="PDB" id="1URL">
    <property type="method" value="X-ray"/>
    <property type="resolution" value="2.40 A"/>
    <property type="chains" value="A=20-137"/>
</dbReference>
<dbReference type="PDB" id="2BVE">
    <property type="method" value="X-ray"/>
    <property type="resolution" value="2.20 A"/>
    <property type="chains" value="A/B=20-138"/>
</dbReference>
<dbReference type="PDBsum" id="1OD7"/>
<dbReference type="PDBsum" id="1OD9"/>
<dbReference type="PDBsum" id="1ODA"/>
<dbReference type="PDBsum" id="1QFO"/>
<dbReference type="PDBsum" id="1QFP"/>
<dbReference type="PDBsum" id="1URL"/>
<dbReference type="PDBsum" id="2BVE"/>
<dbReference type="SMR" id="Q62230"/>
<dbReference type="BioGRID" id="203360">
    <property type="interactions" value="2"/>
</dbReference>
<dbReference type="FunCoup" id="Q62230">
    <property type="interactions" value="320"/>
</dbReference>
<dbReference type="IntAct" id="Q62230">
    <property type="interactions" value="2"/>
</dbReference>
<dbReference type="STRING" id="10090.ENSMUSP00000028794"/>
<dbReference type="UniLectin" id="Q62230"/>
<dbReference type="GlyCosmos" id="Q62230">
    <property type="glycosylation" value="15 sites, No reported glycans"/>
</dbReference>
<dbReference type="GlyGen" id="Q62230">
    <property type="glycosylation" value="15 sites, 1 N-linked glycan (1 site)"/>
</dbReference>
<dbReference type="iPTMnet" id="Q62230"/>
<dbReference type="PhosphoSitePlus" id="Q62230"/>
<dbReference type="PaxDb" id="10090-ENSMUSP00000028794"/>
<dbReference type="ProteomicsDB" id="261097">
    <molecule id="Q62230-1"/>
</dbReference>
<dbReference type="ProteomicsDB" id="261098">
    <molecule id="Q62230-2"/>
</dbReference>
<dbReference type="ProteomicsDB" id="261099">
    <molecule id="Q62230-3"/>
</dbReference>
<dbReference type="DNASU" id="20612"/>
<dbReference type="GeneID" id="20612"/>
<dbReference type="KEGG" id="mmu:20612"/>
<dbReference type="UCSC" id="uc008mkp.1">
    <molecule id="Q62230-3"/>
    <property type="organism name" value="mouse"/>
</dbReference>
<dbReference type="UCSC" id="uc008mkq.1">
    <molecule id="Q62230-2"/>
    <property type="organism name" value="mouse"/>
</dbReference>
<dbReference type="AGR" id="MGI:99668"/>
<dbReference type="CTD" id="6614"/>
<dbReference type="MGI" id="MGI:99668">
    <property type="gene designation" value="Siglec1"/>
</dbReference>
<dbReference type="eggNOG" id="KOG4475">
    <property type="taxonomic scope" value="Eukaryota"/>
</dbReference>
<dbReference type="InParanoid" id="Q62230"/>
<dbReference type="OrthoDB" id="10039395at2759"/>
<dbReference type="Reactome" id="R-MMU-198933">
    <property type="pathway name" value="Immunoregulatory interactions between a Lymphoid and a non-Lymphoid cell"/>
</dbReference>
<dbReference type="BioGRID-ORCS" id="20612">
    <property type="hits" value="2 hits in 77 CRISPR screens"/>
</dbReference>
<dbReference type="EvolutionaryTrace" id="Q62230"/>
<dbReference type="PRO" id="PR:Q62230"/>
<dbReference type="Proteomes" id="UP000000589">
    <property type="component" value="Unplaced"/>
</dbReference>
<dbReference type="RNAct" id="Q62230">
    <property type="molecule type" value="protein"/>
</dbReference>
<dbReference type="GO" id="GO:0005576">
    <property type="term" value="C:extracellular region"/>
    <property type="evidence" value="ECO:0007669"/>
    <property type="project" value="UniProtKB-SubCell"/>
</dbReference>
<dbReference type="GO" id="GO:0005886">
    <property type="term" value="C:plasma membrane"/>
    <property type="evidence" value="ECO:0007669"/>
    <property type="project" value="UniProtKB-SubCell"/>
</dbReference>
<dbReference type="GO" id="GO:0030246">
    <property type="term" value="F:carbohydrate binding"/>
    <property type="evidence" value="ECO:0007669"/>
    <property type="project" value="UniProtKB-KW"/>
</dbReference>
<dbReference type="GO" id="GO:0007155">
    <property type="term" value="P:cell adhesion"/>
    <property type="evidence" value="ECO:0007669"/>
    <property type="project" value="UniProtKB-KW"/>
</dbReference>
<dbReference type="GO" id="GO:0006897">
    <property type="term" value="P:endocytosis"/>
    <property type="evidence" value="ECO:0007669"/>
    <property type="project" value="UniProtKB-KW"/>
</dbReference>
<dbReference type="GO" id="GO:2001238">
    <property type="term" value="P:positive regulation of extrinsic apoptotic signaling pathway"/>
    <property type="evidence" value="ECO:0000315"/>
    <property type="project" value="MGI"/>
</dbReference>
<dbReference type="GO" id="GO:0070234">
    <property type="term" value="P:positive regulation of T cell apoptotic process"/>
    <property type="evidence" value="ECO:0000315"/>
    <property type="project" value="MGI"/>
</dbReference>
<dbReference type="CDD" id="cd00096">
    <property type="entry name" value="Ig"/>
    <property type="match status" value="4"/>
</dbReference>
<dbReference type="CDD" id="cd05712">
    <property type="entry name" value="IgV_CD33"/>
    <property type="match status" value="1"/>
</dbReference>
<dbReference type="FunFam" id="2.60.40.10:FF:002859">
    <property type="entry name" value="Sialoadhesin"/>
    <property type="match status" value="1"/>
</dbReference>
<dbReference type="FunFam" id="2.60.40.10:FF:002861">
    <property type="entry name" value="Sialoadhesin"/>
    <property type="match status" value="1"/>
</dbReference>
<dbReference type="FunFam" id="2.60.40.10:FF:000921">
    <property type="entry name" value="sialoadhesin isoform X1"/>
    <property type="match status" value="6"/>
</dbReference>
<dbReference type="FunFam" id="2.60.40.10:FF:001277">
    <property type="entry name" value="sialoadhesin isoform X1"/>
    <property type="match status" value="4"/>
</dbReference>
<dbReference type="Gene3D" id="2.60.40.10">
    <property type="entry name" value="Immunoglobulins"/>
    <property type="match status" value="17"/>
</dbReference>
<dbReference type="InterPro" id="IPR013162">
    <property type="entry name" value="CD80_C2-set"/>
</dbReference>
<dbReference type="InterPro" id="IPR007110">
    <property type="entry name" value="Ig-like_dom"/>
</dbReference>
<dbReference type="InterPro" id="IPR036179">
    <property type="entry name" value="Ig-like_dom_sf"/>
</dbReference>
<dbReference type="InterPro" id="IPR013783">
    <property type="entry name" value="Ig-like_fold"/>
</dbReference>
<dbReference type="InterPro" id="IPR013098">
    <property type="entry name" value="Ig_I-set"/>
</dbReference>
<dbReference type="InterPro" id="IPR003599">
    <property type="entry name" value="Ig_sub"/>
</dbReference>
<dbReference type="InterPro" id="IPR003598">
    <property type="entry name" value="Ig_sub2"/>
</dbReference>
<dbReference type="InterPro" id="IPR013106">
    <property type="entry name" value="Ig_V-set"/>
</dbReference>
<dbReference type="InterPro" id="IPR013151">
    <property type="entry name" value="Immunoglobulin_dom"/>
</dbReference>
<dbReference type="PANTHER" id="PTHR47243">
    <property type="entry name" value="SIALOADHESIN"/>
    <property type="match status" value="1"/>
</dbReference>
<dbReference type="PANTHER" id="PTHR47243:SF1">
    <property type="entry name" value="SIALOADHESIN"/>
    <property type="match status" value="1"/>
</dbReference>
<dbReference type="Pfam" id="PF08205">
    <property type="entry name" value="C2-set_2"/>
    <property type="match status" value="1"/>
</dbReference>
<dbReference type="Pfam" id="PF07679">
    <property type="entry name" value="I-set"/>
    <property type="match status" value="3"/>
</dbReference>
<dbReference type="Pfam" id="PF00047">
    <property type="entry name" value="ig"/>
    <property type="match status" value="1"/>
</dbReference>
<dbReference type="Pfam" id="PF13895">
    <property type="entry name" value="Ig_2"/>
    <property type="match status" value="6"/>
</dbReference>
<dbReference type="Pfam" id="PF07686">
    <property type="entry name" value="V-set"/>
    <property type="match status" value="1"/>
</dbReference>
<dbReference type="SMART" id="SM00409">
    <property type="entry name" value="IG"/>
    <property type="match status" value="16"/>
</dbReference>
<dbReference type="SMART" id="SM00408">
    <property type="entry name" value="IGc2"/>
    <property type="match status" value="15"/>
</dbReference>
<dbReference type="SUPFAM" id="SSF48726">
    <property type="entry name" value="Immunoglobulin"/>
    <property type="match status" value="12"/>
</dbReference>
<dbReference type="PROSITE" id="PS50835">
    <property type="entry name" value="IG_LIKE"/>
    <property type="match status" value="14"/>
</dbReference>
<keyword id="KW-0002">3D-structure</keyword>
<keyword id="KW-0025">Alternative splicing</keyword>
<keyword id="KW-0130">Cell adhesion</keyword>
<keyword id="KW-1003">Cell membrane</keyword>
<keyword id="KW-0903">Direct protein sequencing</keyword>
<keyword id="KW-1015">Disulfide bond</keyword>
<keyword id="KW-0254">Endocytosis</keyword>
<keyword id="KW-0325">Glycoprotein</keyword>
<keyword id="KW-0393">Immunoglobulin domain</keyword>
<keyword id="KW-0430">Lectin</keyword>
<keyword id="KW-0472">Membrane</keyword>
<keyword id="KW-1185">Reference proteome</keyword>
<keyword id="KW-0677">Repeat</keyword>
<keyword id="KW-0964">Secreted</keyword>
<keyword id="KW-0732">Signal</keyword>
<keyword id="KW-0812">Transmembrane</keyword>
<keyword id="KW-1133">Transmembrane helix</keyword>
<reference key="1">
    <citation type="journal article" date="1994" name="EMBO J.">
        <title>Sialoadhesin, a macrophage sialic acid binding receptor for haemopoietic cells with 17 immunoglobulin-like domains.</title>
        <authorList>
            <person name="Crocker P.R."/>
            <person name="Mucklow S."/>
            <person name="Boukson V."/>
            <person name="McWilliam A."/>
            <person name="Willis A.C."/>
            <person name="Gordon S."/>
            <person name="Milon G."/>
            <person name="Kelm S."/>
            <person name="Bradfield P."/>
        </authorList>
    </citation>
    <scope>NUCLEOTIDE SEQUENCE [MRNA] (ISOFORMS 1; 2 AND 3)</scope>
    <scope>PARTIAL PROTEIN SEQUENCE</scope>
    <source>
        <strain>C57BL/6J</strain>
        <tissue>Macrophage</tissue>
    </source>
</reference>
<reference key="2">
    <citation type="journal article" date="1997" name="Mamm. Genome">
        <title>Characterization of the mouse sialoadhesin gene, Sn.</title>
        <authorList>
            <person name="Mucklow S."/>
            <person name="Gordon S."/>
            <person name="Crocker P.R."/>
        </authorList>
    </citation>
    <scope>NUCLEOTIDE SEQUENCE [GENOMIC DNA]</scope>
</reference>
<reference key="3">
    <citation type="journal article" date="2009" name="PLoS Biol.">
        <title>Lineage-specific biology revealed by a finished genome assembly of the mouse.</title>
        <authorList>
            <person name="Church D.M."/>
            <person name="Goodstadt L."/>
            <person name="Hillier L.W."/>
            <person name="Zody M.C."/>
            <person name="Goldstein S."/>
            <person name="She X."/>
            <person name="Bult C.J."/>
            <person name="Agarwala R."/>
            <person name="Cherry J.L."/>
            <person name="DiCuccio M."/>
            <person name="Hlavina W."/>
            <person name="Kapustin Y."/>
            <person name="Meric P."/>
            <person name="Maglott D."/>
            <person name="Birtle Z."/>
            <person name="Marques A.C."/>
            <person name="Graves T."/>
            <person name="Zhou S."/>
            <person name="Teague B."/>
            <person name="Potamousis K."/>
            <person name="Churas C."/>
            <person name="Place M."/>
            <person name="Herschleb J."/>
            <person name="Runnheim R."/>
            <person name="Forrest D."/>
            <person name="Amos-Landgraf J."/>
            <person name="Schwartz D.C."/>
            <person name="Cheng Z."/>
            <person name="Lindblad-Toh K."/>
            <person name="Eichler E.E."/>
            <person name="Ponting C.P."/>
        </authorList>
    </citation>
    <scope>NUCLEOTIDE SEQUENCE [LARGE SCALE GENOMIC DNA]</scope>
    <source>
        <strain>C57BL/6J</strain>
    </source>
</reference>
<reference key="4">
    <citation type="journal article" date="1991" name="EMBO J.">
        <title>Purification and properties of sialoadhesin, a sialic acid-binding receptor of murine tissue macrophages.</title>
        <authorList>
            <person name="Crocker P.R."/>
        </authorList>
    </citation>
    <scope>CHARACTERIZATION</scope>
    <source>
        <strain>C57BL/6J</strain>
        <tissue>Spleen</tissue>
    </source>
</reference>
<reference key="5">
    <citation type="journal article" date="1994" name="Curr. Biol.">
        <title>Sialoadhesin, myelin-associated glycoprotein and CD22 define a new family of sialic acid-dependent adhesion molecules of the immunoglobulin superfamily.</title>
        <authorList>
            <person name="Kelm S."/>
            <person name="Pelz A."/>
            <person name="Schauer R."/>
            <person name="Filbin M.T."/>
            <person name="Tang S."/>
            <person name="de Bellard M.E."/>
            <person name="Schnaar R.L."/>
            <person name="Mahoney J.A."/>
            <person name="Hartnell A."/>
            <person name="Bradfield P."/>
            <person name="Crocker P.R."/>
        </authorList>
    </citation>
    <scope>SIALIC ACID-BINDING</scope>
</reference>
<reference key="6">
    <citation type="journal article" date="2001" name="J. Immunol.">
        <title>CD43 functions as a T cell counterreceptor for the macrophage adhesion receptor sialoadhesin (Siglec-1).</title>
        <authorList>
            <person name="van den Berg T.K."/>
            <person name="Nath D."/>
            <person name="Ziltener H.J."/>
            <person name="Vestweber D."/>
            <person name="Fukuda M."/>
            <person name="van Die I."/>
            <person name="Crocker P.R."/>
        </authorList>
    </citation>
    <scope>INTERACTION WITH SPN</scope>
</reference>
<reference key="7">
    <citation type="journal article" date="2004" name="J. Biol. Chem.">
        <title>Identification of sialoadhesin as a dominant lymph node counter-receptor for mouse macrophage galactose-type C-type lectin 1.</title>
        <authorList>
            <person name="Kumamoto Y."/>
            <person name="Higashi N."/>
            <person name="Denda-Nagai K."/>
            <person name="Tsuiji M."/>
            <person name="Sato K."/>
            <person name="Crocker P.R."/>
            <person name="Irimura T."/>
        </authorList>
    </citation>
    <scope>FUNCTION</scope>
    <scope>INTERACTION WITH CLEC10A</scope>
    <scope>TISSUE SPECIFICITY</scope>
</reference>
<reference key="8">
    <citation type="journal article" date="2006" name="Mol. Cell. Biol.">
        <title>Sialoadhesin-deficient mice exhibit subtle changes in B- and T-cell populations and reduced immunoglobulin M levels.</title>
        <authorList>
            <person name="Oetke C."/>
            <person name="Vinson M.C."/>
            <person name="Jones C."/>
            <person name="Crocker P.R."/>
        </authorList>
    </citation>
    <scope>DISRUPTION PHENOTYPE</scope>
</reference>
<reference key="9">
    <citation type="journal article" date="2010" name="Cell">
        <title>A tissue-specific atlas of mouse protein phosphorylation and expression.</title>
        <authorList>
            <person name="Huttlin E.L."/>
            <person name="Jedrychowski M.P."/>
            <person name="Elias J.E."/>
            <person name="Goswami T."/>
            <person name="Rad R."/>
            <person name="Beausoleil S.A."/>
            <person name="Villen J."/>
            <person name="Haas W."/>
            <person name="Sowa M.E."/>
            <person name="Gygi S.P."/>
        </authorList>
    </citation>
    <scope>IDENTIFICATION BY MASS SPECTROMETRY [LARGE SCALE ANALYSIS]</scope>
    <source>
        <tissue>Brown adipose tissue</tissue>
        <tissue>Heart</tissue>
        <tissue>Liver</tissue>
        <tissue>Pancreas</tissue>
        <tissue>Spleen</tissue>
    </source>
</reference>
<reference key="10">
    <citation type="journal article" date="2014" name="J. Mol. Med.">
        <title>Role of macrophage sialoadhesin in host defense against the sialylated pathogen group B Streptococcus.</title>
        <authorList>
            <person name="Chang Y.C."/>
            <person name="Olson J."/>
            <person name="Louie A."/>
            <person name="Crocker P.R."/>
            <person name="Varki A."/>
            <person name="Nizet V."/>
        </authorList>
    </citation>
    <scope>FUNCTION</scope>
    <scope>DISRUPTION PHENOTYPE</scope>
</reference>
<reference key="11">
    <citation type="journal article" date="2015" name="J. Biol. Chem.">
        <title>Mouse Siglec-1 Mediates trans-Infection of Surface-bound Murine Leukemia Virus in a Sialic Acid N-Acyl Side Chain-dependent Manner.</title>
        <authorList>
            <person name="Erikson E."/>
            <person name="Wratil P.R."/>
            <person name="Frank M."/>
            <person name="Ambiel I."/>
            <person name="Pahnke K."/>
            <person name="Pino M."/>
            <person name="Azadi P."/>
            <person name="Izquierdo-Useros N."/>
            <person name="Martinez-Picado J."/>
            <person name="Meier C."/>
            <person name="Schnaar R.L."/>
            <person name="Crocker P.R."/>
            <person name="Reutter W."/>
            <person name="Keppler O.T."/>
        </authorList>
    </citation>
    <scope>FUNCTION</scope>
    <scope>INDUCTION BY INTERFERON-ALPHA</scope>
    <scope>TISSUE SPECIFICITY</scope>
</reference>
<reference key="12">
    <citation type="journal article" date="1998" name="Mol. Cell">
        <title>Crystal structure of the N-terminal domain of sialoadhesin in complex with 3' sialyllactose at 1.85 A resolution.</title>
        <authorList>
            <person name="May A.P."/>
            <person name="Robinson R.C."/>
            <person name="Vinson M."/>
            <person name="Crocker P.R."/>
            <person name="Jones E.Y."/>
        </authorList>
    </citation>
    <scope>X-RAY CRYSTALLOGRAPHY (1.85 ANGSTROMS) OF 20-138 IN COMPLEX WITH 3'SIALYLLACTOSE</scope>
    <scope>DISULFIDE BOND</scope>
</reference>
<reference key="13">
    <citation type="journal article" date="1999" name="Biochem. J.">
        <title>Molecular analysis of sialoside binding to sialoadhesin by NMR and site-directed mutagenesis.</title>
        <authorList>
            <person name="Crocker P.R."/>
            <person name="Vinson M."/>
            <person name="Kelm S."/>
            <person name="Drickamer K."/>
        </authorList>
    </citation>
    <scope>STRUCTURE BY NMR OF 20-138</scope>
    <scope>MUTAGENESIS OF TRP-21 AND ARG-116</scope>
</reference>
<reference key="14">
    <citation type="journal article" date="2003" name="Structure">
        <title>Structure-guided design of sialic acid-based Siglec inhibitors and crystallographic analysis in complex with sialoadhesin.</title>
        <authorList>
            <person name="Zaccai N.R."/>
            <person name="Maenaka K."/>
            <person name="Maenaka T."/>
            <person name="Crocker P.R."/>
            <person name="Brossmer R."/>
            <person name="Kelm S."/>
            <person name="Jones E.Y."/>
        </authorList>
    </citation>
    <scope>X-RAY CRYSTALLOGRAPHY (2.1 ANGSTROMS) OF 20-138 IN COMPLEX WITH SIALIC ACID-BASED INHIBITORS</scope>
    <scope>DISULFIDE BOND</scope>
</reference>
<reference key="15">
    <citation type="journal article" date="2004" name="Biochim. Biophys. Acta">
        <title>Complex of sialoadhesin with a glycopeptide ligand.</title>
        <authorList>
            <person name="Bukrinsky J.T."/>
            <person name="St Hilaire P.M."/>
            <person name="Meldal M."/>
            <person name="Crocker P.R."/>
            <person name="Henriksen A."/>
        </authorList>
    </citation>
    <scope>X-RAY CRYSTALLOGRAPHY (2.4 ANGSTROMS) OF 20-137 IN COMPLEX WITH SIALIC ACID-CONTAINING PEPTIDE</scope>
    <scope>DISULFIDE BOND</scope>
</reference>
<accession>Q62230</accession>
<accession>D3YVZ3</accession>
<accession>D3YVZ4</accession>
<accession>O55216</accession>
<accession>Q62228</accession>
<accession>Q62229</accession>
<protein>
    <recommendedName>
        <fullName>Sialoadhesin</fullName>
    </recommendedName>
    <alternativeName>
        <fullName>Sheep erythrocyte receptor</fullName>
        <shortName>SER</shortName>
    </alternativeName>
    <alternativeName>
        <fullName>Sialic acid-binding Ig-like lectin 1</fullName>
        <shortName>Siglec-1</shortName>
    </alternativeName>
    <cdAntigenName>CD169</cdAntigenName>
</protein>
<name>SN_MOUSE</name>
<evidence type="ECO:0000250" key="1">
    <source>
        <dbReference type="UniProtKB" id="Q9BZZ2"/>
    </source>
</evidence>
<evidence type="ECO:0000255" key="2"/>
<evidence type="ECO:0000255" key="3">
    <source>
        <dbReference type="PROSITE-ProRule" id="PRU00114"/>
    </source>
</evidence>
<evidence type="ECO:0000269" key="4">
    <source>
    </source>
</evidence>
<evidence type="ECO:0000269" key="5">
    <source>
    </source>
</evidence>
<evidence type="ECO:0000269" key="6">
    <source>
    </source>
</evidence>
<evidence type="ECO:0000269" key="7">
    <source>
    </source>
</evidence>
<evidence type="ECO:0000269" key="8">
    <source>
    </source>
</evidence>
<evidence type="ECO:0000269" key="9">
    <source>
    </source>
</evidence>
<evidence type="ECO:0000269" key="10">
    <source>
    </source>
</evidence>
<evidence type="ECO:0000269" key="11">
    <source>
    </source>
</evidence>
<evidence type="ECO:0000269" key="12">
    <source>
    </source>
</evidence>
<evidence type="ECO:0000303" key="13">
    <source>
    </source>
</evidence>
<evidence type="ECO:0000305" key="14"/>
<evidence type="ECO:0000305" key="15">
    <source>
    </source>
</evidence>
<evidence type="ECO:0000305" key="16">
    <source>
    </source>
</evidence>
<evidence type="ECO:0000305" key="17">
    <source>
    </source>
</evidence>
<evidence type="ECO:0000305" key="18">
    <source>
    </source>
</evidence>
<evidence type="ECO:0007829" key="19">
    <source>
        <dbReference type="PDB" id="1QFO"/>
    </source>
</evidence>
<sequence length="1695" mass="182979">MCVLFSLLLLASVFSLGQTTWGVSSPKNVQGLSGSCLLIPCIFSYPADVPVSNGITAIWYYDYSGKRQVVIHSGDPKLVDKRFRGRAELMGNMDHKVCNLLLKDLKPEDSGTYNFRFEISDSNRWLDVKGTTVTVTTDPSPPTITIPEELREGMERNFNCSTPYLCLQEKQVSLQWRGQDPTHSVTSSFQSLEPTGVYHQTTLHMALSWQDHGRTLLCQFSLGAHSSRKEVYLQVPHAPKGVEILLSSSGRNILPGDPVTLTCRVNSSYPAVSAVQWARDGVNLGVTGHVLRLFSAAWNDSGAYTCQATNDMGSLVSSPLSLHVFMAEVKMNPAGPVLENETVTLLCSTPKEAPQELRYSWYKNHILLEDAHASTLHLPAVTRADTGFYFCEVQNAQGSERSSPLSVVVRYPPLTPDLTTFLETQAGLVGILHCSVVSEPLATVVLSHGGLTLASNSGENDFNPRFRISSAPNSLRLEIRDLQPADSGEYTCLAVNSLGNSTSSLDFYANVARLLINPSAEVVEGQAVTLSCRSGLSPAPDTRFSWYLNGALLLEGSSSSLLLPAASSTDAGSYYCRTQAGPNTSGPSLPTVLTVFYPPRKPTFTARLDLDTSGVGDGRRGILLCHVDSDPPAQLRLLHKGHVVATSLPSRCGSCSQRTKVSRTSNSLHVEIQKPVLEDEGVYLCEASNTLGNSSAAASFNAKATVLVITPSNTLREGTEANLTCNVNQEVAVSPANFSWFRNGVLWTQGSLETVRLQPVARTDAAVYACRLLTEDGAQLSAPVVLSVLYAPDPPKLSALLDVGQGHMAVFICTVDSYPLAHLSLFRGDHLLATNLEPQRPSHGRIQAKATANSLQLEVRELGLVDSGNYHCEATNILGSANSSLFFQVRGAWVQVSPSPELREGQAVVLSCQVPTGVSEGTSYSWYQDGRPLQESTSSTLRIAAISLRQAGAYHCQAQAPDTAIASLAAPVSLHVSYTPRHVTLSALLSTDPERLGHLVCSVQSDPPAQLQLFHRNRLVASTLQGADELAGSNPRLHVTVLPNELRLQIHFPELEDDGTYTCEASNTLGQASAAADFDAQAVRVTVWPNATVQEGQQVNLTCLVWSTHQDSLSYTWYKGGQQLLGARSITLPSVKVLDATSYRCGVGLPGHAPHLSRPVTLDVLHAPRNLRLTYLLETQGRQLALVLCTVDSRPPAQLTLSHGDQLVASSTEASVPNTLRLELQDPRPSNEGLYSCSAHSPLGKANTSLELLLEGVRVKMNPSGSVPEGEPVTVTCEDPAALSSALYAWFHNGHWLQEGPASSLQFLVTTRAHAGAYFCQVHDTQGTRSSRPASLQILYAPRDAVLSSFRDSRTRLMVVIQCTVDSEPPAEMVLSHNGKVLAASHERHSSASGIGHIQVARNALRLQVQDVTLGDGNTYVCTAQNTLGSISTTQRLLTETDIRVTAEPGLDVPEGTALNLSCLLPGGSGPTGNSSFTWFWNRHRLHSAPVPTLSFTPVVRAQAGLYHCRADLPTGATTSAPVMLRVLYPPKTPTLIVFVEPQGGHQGILDCRVDSEPLAILTLHRGSQLVASNQLHDAPTKPHIRVTAPPNALRVDIEELGPSNQGEYVCTASNTLGSASASAYFGTRALHQLQLFQRLLWVLGFLAGFLCLLLGLVAYHTWRKKSSTKLNEDENSAEMATKKNTIQEEVVAAL</sequence>
<gene>
    <name type="primary">Siglec1</name>
    <name type="synonym">Sa</name>
    <name type="synonym">Sn</name>
</gene>
<feature type="signal peptide">
    <location>
        <begin position="1"/>
        <end position="19"/>
    </location>
</feature>
<feature type="chain" id="PRO_0000014969" description="Sialoadhesin">
    <location>
        <begin position="20"/>
        <end position="1695"/>
    </location>
</feature>
<feature type="topological domain" description="Extracellular" evidence="2">
    <location>
        <begin position="20"/>
        <end position="1639"/>
    </location>
</feature>
<feature type="transmembrane region" description="Helical" evidence="2">
    <location>
        <begin position="1640"/>
        <end position="1660"/>
    </location>
</feature>
<feature type="topological domain" description="Cytoplasmic" evidence="2">
    <location>
        <begin position="1661"/>
        <end position="1695"/>
    </location>
</feature>
<feature type="domain" description="Ig-like V-type">
    <location>
        <begin position="20"/>
        <end position="136"/>
    </location>
</feature>
<feature type="domain" description="Ig-like C2-type 1">
    <location>
        <begin position="153"/>
        <end position="235"/>
    </location>
</feature>
<feature type="domain" description="Ig-like C2-type 2">
    <location>
        <begin position="239"/>
        <end position="321"/>
    </location>
</feature>
<feature type="domain" description="Ig-like C2-type 3">
    <location>
        <begin position="326"/>
        <end position="406"/>
    </location>
</feature>
<feature type="domain" description="Ig-like C2-type 4">
    <location>
        <begin position="416"/>
        <end position="508"/>
    </location>
</feature>
<feature type="domain" description="Ig-like C2-type 5">
    <location>
        <begin position="509"/>
        <end position="594"/>
    </location>
</feature>
<feature type="domain" description="Ig-like C2-type 6">
    <location>
        <begin position="602"/>
        <end position="701"/>
    </location>
</feature>
<feature type="domain" description="Ig-like C2-type 7">
    <location>
        <begin position="704"/>
        <end position="781"/>
    </location>
</feature>
<feature type="domain" description="Ig-like C2-type 8">
    <location>
        <begin position="795"/>
        <end position="890"/>
    </location>
</feature>
<feature type="domain" description="Ig-like C2-type 9">
    <location>
        <begin position="894"/>
        <end position="973"/>
    </location>
</feature>
<feature type="domain" description="Ig-like C2-type 10">
    <location>
        <begin position="980"/>
        <end position="1079"/>
    </location>
</feature>
<feature type="domain" description="Ig-like C2-type 11">
    <location>
        <begin position="1081"/>
        <end position="1161"/>
    </location>
</feature>
<feature type="domain" description="Ig-like C2-type 12">
    <location>
        <begin position="1172"/>
        <end position="1264"/>
    </location>
</feature>
<feature type="domain" description="Ig-like C2-type 13">
    <location>
        <begin position="1245"/>
        <end position="1337"/>
    </location>
</feature>
<feature type="domain" description="Ig-like C2-type 14">
    <location>
        <begin position="1342"/>
        <end position="1439"/>
    </location>
</feature>
<feature type="domain" description="Ig-like C2-type 15">
    <location>
        <begin position="1442"/>
        <end position="1520"/>
    </location>
</feature>
<feature type="domain" description="Ig-like C2-type 16">
    <location>
        <begin position="1534"/>
        <end position="1627"/>
    </location>
</feature>
<feature type="short sequence motif" description="Cell attachment site" evidence="2">
    <location>
        <begin position="827"/>
        <end position="829"/>
    </location>
</feature>
<feature type="binding site" evidence="18">
    <location>
        <position position="63"/>
    </location>
    <ligand>
        <name>N-acetylneuraminate</name>
        <dbReference type="ChEBI" id="CHEBI:35418"/>
    </ligand>
</feature>
<feature type="binding site" evidence="15 16 17 18">
    <location>
        <position position="116"/>
    </location>
    <ligand>
        <name>N-acetylneuraminate</name>
        <dbReference type="ChEBI" id="CHEBI:35418"/>
    </ligand>
</feature>
<feature type="binding site">
    <location>
        <begin position="122"/>
        <end position="126"/>
    </location>
    <ligand>
        <name>N-acetylneuraminate</name>
        <dbReference type="ChEBI" id="CHEBI:35418"/>
    </ligand>
</feature>
<feature type="glycosylation site" description="N-linked (GlcNAc...) asparagine" evidence="2">
    <location>
        <position position="159"/>
    </location>
</feature>
<feature type="glycosylation site" description="N-linked (GlcNAc...) asparagine" evidence="2">
    <location>
        <position position="266"/>
    </location>
</feature>
<feature type="glycosylation site" description="N-linked (GlcNAc...) asparagine" evidence="2">
    <location>
        <position position="299"/>
    </location>
</feature>
<feature type="glycosylation site" description="N-linked (GlcNAc...) asparagine" evidence="2">
    <location>
        <position position="340"/>
    </location>
</feature>
<feature type="glycosylation site" description="N-linked (GlcNAc...) asparagine" evidence="2">
    <location>
        <position position="500"/>
    </location>
</feature>
<feature type="glycosylation site" description="N-linked (GlcNAc...) asparagine" evidence="2">
    <location>
        <position position="583"/>
    </location>
</feature>
<feature type="glycosylation site" description="N-linked (GlcNAc...) asparagine" evidence="2">
    <location>
        <position position="693"/>
    </location>
</feature>
<feature type="glycosylation site" description="N-linked (GlcNAc...) asparagine" evidence="2">
    <location>
        <position position="722"/>
    </location>
</feature>
<feature type="glycosylation site" description="N-linked (GlcNAc...) asparagine" evidence="2">
    <location>
        <position position="737"/>
    </location>
</feature>
<feature type="glycosylation site" description="N-linked (GlcNAc...) asparagine" evidence="2">
    <location>
        <position position="882"/>
    </location>
</feature>
<feature type="glycosylation site" description="N-linked (GlcNAc...) asparagine" evidence="2">
    <location>
        <position position="1090"/>
    </location>
</feature>
<feature type="glycosylation site" description="N-linked (GlcNAc...) asparagine" evidence="2">
    <location>
        <position position="1100"/>
    </location>
</feature>
<feature type="glycosylation site" description="N-linked (GlcNAc...) asparagine" evidence="2">
    <location>
        <position position="1247"/>
    </location>
</feature>
<feature type="glycosylation site" description="N-linked (GlcNAc...) asparagine" evidence="2">
    <location>
        <position position="1460"/>
    </location>
</feature>
<feature type="glycosylation site" description="N-linked (GlcNAc...) asparagine" evidence="2">
    <location>
        <position position="1474"/>
    </location>
</feature>
<feature type="disulfide bond" evidence="3">
    <location>
        <begin position="36"/>
        <end position="166"/>
    </location>
</feature>
<feature type="disulfide bond" evidence="3 8">
    <location>
        <begin position="41"/>
        <end position="98"/>
    </location>
</feature>
<feature type="disulfide bond" evidence="3">
    <location>
        <begin position="160"/>
        <end position="218"/>
    </location>
</feature>
<feature type="disulfide bond" evidence="3">
    <location>
        <begin position="263"/>
        <end position="306"/>
    </location>
</feature>
<feature type="disulfide bond" evidence="3">
    <location>
        <begin position="347"/>
        <end position="391"/>
    </location>
</feature>
<feature type="disulfide bond" evidence="3">
    <location>
        <begin position="434"/>
        <end position="492"/>
    </location>
</feature>
<feature type="disulfide bond" evidence="3">
    <location>
        <begin position="532"/>
        <end position="576"/>
    </location>
</feature>
<feature type="disulfide bond" evidence="3">
    <location>
        <begin position="625"/>
        <end position="685"/>
    </location>
</feature>
<feature type="disulfide bond" evidence="3">
    <location>
        <begin position="725"/>
        <end position="770"/>
    </location>
</feature>
<feature type="disulfide bond" evidence="3">
    <location>
        <begin position="813"/>
        <end position="872"/>
    </location>
</feature>
<feature type="disulfide bond" evidence="3">
    <location>
        <begin position="912"/>
        <end position="956"/>
    </location>
</feature>
<feature type="disulfide bond" evidence="3">
    <location>
        <begin position="1001"/>
        <end position="1063"/>
    </location>
</feature>
<feature type="disulfide bond" evidence="3">
    <location>
        <begin position="1103"/>
        <end position="1145"/>
    </location>
</feature>
<feature type="disulfide bond" evidence="3">
    <location>
        <begin position="1189"/>
        <end position="1237"/>
    </location>
</feature>
<feature type="disulfide bond" evidence="3">
    <location>
        <begin position="1277"/>
        <end position="1320"/>
    </location>
</feature>
<feature type="disulfide bond" evidence="3">
    <location>
        <begin position="1363"/>
        <end position="1422"/>
    </location>
</feature>
<feature type="disulfide bond" evidence="3">
    <location>
        <begin position="1463"/>
        <end position="1509"/>
    </location>
</feature>
<feature type="disulfide bond" evidence="3">
    <location>
        <begin position="1552"/>
        <end position="1611"/>
    </location>
</feature>
<feature type="splice variant" id="VSP_002573" description="In isoform 2." evidence="13">
    <original>MAEVKMNPAGPVLEN</original>
    <variation>SESWMRLRGPVSGKH</variation>
    <location>
        <begin position="326"/>
        <end position="340"/>
    </location>
</feature>
<feature type="splice variant" id="VSP_002574" description="In isoform 2." evidence="13">
    <location>
        <begin position="341"/>
        <end position="1695"/>
    </location>
</feature>
<feature type="splice variant" id="VSP_002575" description="In isoform 3." evidence="13">
    <original>YPPKTPTLIVFVEPQGGHQGILDCRVDSEPLAILTLHRGSQLVASNQLHDAPTKPHIRVTAPPNALRVDIE</original>
    <variation>CEYEPISALCLSLHLTGPYQAFSSAQSKGFIGKGLRTLASSLAGCMWFVSMLGYPALKWRILLPFWDEYRR</variation>
    <location>
        <begin position="1529"/>
        <end position="1599"/>
    </location>
</feature>
<feature type="splice variant" id="VSP_002576" description="In isoform 3." evidence="13">
    <location>
        <begin position="1600"/>
        <end position="1695"/>
    </location>
</feature>
<feature type="mutagenesis site" description="Loss of sialic acid binding." evidence="4">
    <original>W</original>
    <variation>Q</variation>
    <location>
        <position position="21"/>
    </location>
</feature>
<feature type="mutagenesis site" description="Loss of sialic acid binding." evidence="4">
    <original>R</original>
    <variation>A</variation>
    <location>
        <position position="116"/>
    </location>
</feature>
<feature type="mutagenesis site" description="10-fold loss in affinity to sialic acid." evidence="4">
    <original>R</original>
    <variation>L</variation>
    <location>
        <position position="116"/>
    </location>
</feature>
<feature type="sequence conflict" description="In Ref. 2; AAB95641." evidence="14" ref="2">
    <original>N</original>
    <variation>F</variation>
    <location>
        <position position="159"/>
    </location>
</feature>
<feature type="sequence conflict" description="In Ref. 1; CAA85268/CAA85290 and 2; AAB95641." evidence="14" ref="1 2">
    <original>V</original>
    <variation>S</variation>
    <location>
        <position position="197"/>
    </location>
</feature>
<feature type="sequence conflict" description="In Ref. 1; AA sequence." evidence="14" ref="1">
    <original>P</original>
    <variation>Q</variation>
    <location>
        <position position="590"/>
    </location>
</feature>
<feature type="sequence conflict" description="In Ref. 1; CAA85268/CAA85290 and 2; AAB95641." evidence="14" ref="1 2">
    <original>V</original>
    <variation>G</variation>
    <location>
        <position position="727"/>
    </location>
</feature>
<feature type="sequence conflict" description="In Ref. 1; CAA85268/CAA85290 and 2; AAB95641." evidence="14" ref="1 2">
    <original>PV</original>
    <variation>LL</variation>
    <location>
        <begin position="759"/>
        <end position="760"/>
    </location>
</feature>
<feature type="sequence conflict" description="In Ref. 1; AA sequence." evidence="14" ref="1">
    <original>IHF</original>
    <variation>FLV</variation>
    <location>
        <begin position="1050"/>
        <end position="1052"/>
    </location>
</feature>
<feature type="sequence conflict" description="In Ref. 1; AA sequence." evidence="14" ref="1">
    <original>LE</original>
    <variation>VQ</variation>
    <location>
        <begin position="1055"/>
        <end position="1056"/>
    </location>
</feature>
<feature type="sequence conflict" description="In Ref. 1; AA sequence." evidence="14" ref="1">
    <original>T</original>
    <variation>Q</variation>
    <location>
        <position position="1062"/>
    </location>
</feature>
<feature type="sequence conflict" description="In Ref. 1; AA sequence." evidence="14" ref="1">
    <original>S</original>
    <variation>Q</variation>
    <location>
        <position position="1066"/>
    </location>
</feature>
<feature type="sequence conflict" description="In Ref. 1; CAA85268/CAA85290 and 2; AAB95641." evidence="14" ref="1 2">
    <original>N</original>
    <variation>H</variation>
    <location>
        <position position="1426"/>
    </location>
</feature>
<feature type="sequence conflict" description="In Ref. 1; CAA85268/CAA85290 and 2; AAB95641." evidence="14" ref="1 2">
    <original>V</original>
    <variation>W</variation>
    <location>
        <position position="1453"/>
    </location>
</feature>
<feature type="strand" evidence="19">
    <location>
        <begin position="22"/>
        <end position="24"/>
    </location>
</feature>
<feature type="strand" evidence="19">
    <location>
        <begin position="27"/>
        <end position="32"/>
    </location>
</feature>
<feature type="strand" evidence="19">
    <location>
        <begin position="37"/>
        <end position="39"/>
    </location>
</feature>
<feature type="strand" evidence="19">
    <location>
        <begin position="42"/>
        <end position="44"/>
    </location>
</feature>
<feature type="strand" evidence="19">
    <location>
        <begin position="56"/>
        <end position="62"/>
    </location>
</feature>
<feature type="turn" evidence="19">
    <location>
        <begin position="63"/>
        <end position="66"/>
    </location>
</feature>
<feature type="strand" evidence="19">
    <location>
        <begin position="68"/>
        <end position="74"/>
    </location>
</feature>
<feature type="helix" evidence="19">
    <location>
        <begin position="76"/>
        <end position="78"/>
    </location>
</feature>
<feature type="turn" evidence="19">
    <location>
        <begin position="81"/>
        <end position="86"/>
    </location>
</feature>
<feature type="strand" evidence="19">
    <location>
        <begin position="87"/>
        <end position="89"/>
    </location>
</feature>
<feature type="helix" evidence="19">
    <location>
        <begin position="93"/>
        <end position="95"/>
    </location>
</feature>
<feature type="strand" evidence="19">
    <location>
        <begin position="100"/>
        <end position="102"/>
    </location>
</feature>
<feature type="helix" evidence="19">
    <location>
        <begin position="107"/>
        <end position="109"/>
    </location>
</feature>
<feature type="strand" evidence="19">
    <location>
        <begin position="111"/>
        <end position="118"/>
    </location>
</feature>
<feature type="strand" evidence="19">
    <location>
        <begin position="124"/>
        <end position="126"/>
    </location>
</feature>
<feature type="strand" evidence="19">
    <location>
        <begin position="131"/>
        <end position="136"/>
    </location>
</feature>